<sequence length="212" mass="22988">MNSRLIVTGTDTGIGKTVFSAALCHALGAAYWKPVQSGLEEETDSEIVARLAQASPQRILPEAWRLNTPASPHLSARLDGVEIRPEEMHIPATSLPLVIEGAGGLLVPLNDKTLFADLFAIWRIPAILCARAALGTINHTLLSLEAMRSRDIPVLGVAFIGEANEDTETTIAHLGRVKRLGRLPLLDDLSPEKLHHSFARNFHIDDFAGVAR</sequence>
<name>BIOD_BRUC2</name>
<reference key="1">
    <citation type="submission" date="2007-10" db="EMBL/GenBank/DDBJ databases">
        <title>Brucella canis ATCC 23365 whole genome shotgun sequencing project.</title>
        <authorList>
            <person name="Setubal J.C."/>
            <person name="Bowns C."/>
            <person name="Boyle S."/>
            <person name="Crasta O.R."/>
            <person name="Czar M.J."/>
            <person name="Dharmanolla C."/>
            <person name="Gillespie J.J."/>
            <person name="Kenyon R.W."/>
            <person name="Lu J."/>
            <person name="Mane S."/>
            <person name="Mohapatra S."/>
            <person name="Nagrani S."/>
            <person name="Purkayastha A."/>
            <person name="Rajasimha H.K."/>
            <person name="Shallom J.M."/>
            <person name="Shallom S."/>
            <person name="Shukla M."/>
            <person name="Snyder E.E."/>
            <person name="Sobral B.W."/>
            <person name="Wattam A.R."/>
            <person name="Will R."/>
            <person name="Williams K."/>
            <person name="Yoo H."/>
            <person name="Bruce D."/>
            <person name="Detter C."/>
            <person name="Munk C."/>
            <person name="Brettin T.S."/>
        </authorList>
    </citation>
    <scope>NUCLEOTIDE SEQUENCE [LARGE SCALE GENOMIC DNA]</scope>
    <source>
        <strain>ATCC 23365 / NCTC 10854 / RM-666</strain>
    </source>
</reference>
<organism>
    <name type="scientific">Brucella canis (strain ATCC 23365 / NCTC 10854 / RM-666)</name>
    <dbReference type="NCBI Taxonomy" id="483179"/>
    <lineage>
        <taxon>Bacteria</taxon>
        <taxon>Pseudomonadati</taxon>
        <taxon>Pseudomonadota</taxon>
        <taxon>Alphaproteobacteria</taxon>
        <taxon>Hyphomicrobiales</taxon>
        <taxon>Brucellaceae</taxon>
        <taxon>Brucella/Ochrobactrum group</taxon>
        <taxon>Brucella</taxon>
    </lineage>
</organism>
<accession>A9MBD4</accession>
<gene>
    <name evidence="1" type="primary">bioD</name>
    <name type="ordered locus">BCAN_B0492</name>
</gene>
<protein>
    <recommendedName>
        <fullName evidence="1">ATP-dependent dethiobiotin synthetase BioD</fullName>
        <ecNumber evidence="1">6.3.3.3</ecNumber>
    </recommendedName>
    <alternativeName>
        <fullName evidence="1">DTB synthetase</fullName>
        <shortName evidence="1">DTBS</shortName>
    </alternativeName>
    <alternativeName>
        <fullName evidence="1">Dethiobiotin synthase</fullName>
    </alternativeName>
</protein>
<evidence type="ECO:0000255" key="1">
    <source>
        <dbReference type="HAMAP-Rule" id="MF_00336"/>
    </source>
</evidence>
<feature type="chain" id="PRO_1000079269" description="ATP-dependent dethiobiotin synthetase BioD">
    <location>
        <begin position="1"/>
        <end position="212"/>
    </location>
</feature>
<feature type="active site" evidence="1">
    <location>
        <position position="33"/>
    </location>
</feature>
<feature type="binding site" evidence="1">
    <location>
        <begin position="13"/>
        <end position="18"/>
    </location>
    <ligand>
        <name>ATP</name>
        <dbReference type="ChEBI" id="CHEBI:30616"/>
    </ligand>
</feature>
<feature type="binding site" evidence="1">
    <location>
        <position position="17"/>
    </location>
    <ligand>
        <name>Mg(2+)</name>
        <dbReference type="ChEBI" id="CHEBI:18420"/>
    </ligand>
</feature>
<feature type="binding site" evidence="1">
    <location>
        <position position="37"/>
    </location>
    <ligand>
        <name>substrate</name>
    </ligand>
</feature>
<feature type="binding site" evidence="1">
    <location>
        <begin position="100"/>
        <end position="103"/>
    </location>
    <ligand>
        <name>ATP</name>
        <dbReference type="ChEBI" id="CHEBI:30616"/>
    </ligand>
</feature>
<feature type="binding site" evidence="1">
    <location>
        <position position="100"/>
    </location>
    <ligand>
        <name>Mg(2+)</name>
        <dbReference type="ChEBI" id="CHEBI:18420"/>
    </ligand>
</feature>
<feature type="binding site" evidence="1">
    <location>
        <begin position="184"/>
        <end position="186"/>
    </location>
    <ligand>
        <name>ATP</name>
        <dbReference type="ChEBI" id="CHEBI:30616"/>
    </ligand>
</feature>
<comment type="function">
    <text evidence="1">Catalyzes a mechanistically unusual reaction, the ATP-dependent insertion of CO2 between the N7 and N8 nitrogen atoms of 7,8-diaminopelargonic acid (DAPA, also called 7,8-diammoniononanoate) to form a ureido ring.</text>
</comment>
<comment type="catalytic activity">
    <reaction evidence="1">
        <text>(7R,8S)-7,8-diammoniononanoate + CO2 + ATP = (4R,5S)-dethiobiotin + ADP + phosphate + 3 H(+)</text>
        <dbReference type="Rhea" id="RHEA:15805"/>
        <dbReference type="ChEBI" id="CHEBI:15378"/>
        <dbReference type="ChEBI" id="CHEBI:16526"/>
        <dbReference type="ChEBI" id="CHEBI:30616"/>
        <dbReference type="ChEBI" id="CHEBI:43474"/>
        <dbReference type="ChEBI" id="CHEBI:149469"/>
        <dbReference type="ChEBI" id="CHEBI:149473"/>
        <dbReference type="ChEBI" id="CHEBI:456216"/>
        <dbReference type="EC" id="6.3.3.3"/>
    </reaction>
</comment>
<comment type="cofactor">
    <cofactor evidence="1">
        <name>Mg(2+)</name>
        <dbReference type="ChEBI" id="CHEBI:18420"/>
    </cofactor>
</comment>
<comment type="pathway">
    <text evidence="1">Cofactor biosynthesis; biotin biosynthesis; biotin from 7,8-diaminononanoate: step 1/2.</text>
</comment>
<comment type="subunit">
    <text evidence="1">Homodimer.</text>
</comment>
<comment type="subcellular location">
    <subcellularLocation>
        <location evidence="1">Cytoplasm</location>
    </subcellularLocation>
</comment>
<comment type="similarity">
    <text evidence="1">Belongs to the dethiobiotin synthetase family.</text>
</comment>
<dbReference type="EC" id="6.3.3.3" evidence="1"/>
<dbReference type="EMBL" id="CP000873">
    <property type="protein sequence ID" value="ABX63671.1"/>
    <property type="molecule type" value="Genomic_DNA"/>
</dbReference>
<dbReference type="RefSeq" id="WP_004688969.1">
    <property type="nucleotide sequence ID" value="NC_010104.1"/>
</dbReference>
<dbReference type="SMR" id="A9MBD4"/>
<dbReference type="GeneID" id="97535376"/>
<dbReference type="KEGG" id="bcs:BCAN_B0492"/>
<dbReference type="HOGENOM" id="CLU_072551_2_0_5"/>
<dbReference type="UniPathway" id="UPA00078">
    <property type="reaction ID" value="UER00161"/>
</dbReference>
<dbReference type="Proteomes" id="UP000001385">
    <property type="component" value="Chromosome II"/>
</dbReference>
<dbReference type="GO" id="GO:0005829">
    <property type="term" value="C:cytosol"/>
    <property type="evidence" value="ECO:0007669"/>
    <property type="project" value="TreeGrafter"/>
</dbReference>
<dbReference type="GO" id="GO:0005524">
    <property type="term" value="F:ATP binding"/>
    <property type="evidence" value="ECO:0007669"/>
    <property type="project" value="UniProtKB-UniRule"/>
</dbReference>
<dbReference type="GO" id="GO:0004141">
    <property type="term" value="F:dethiobiotin synthase activity"/>
    <property type="evidence" value="ECO:0007669"/>
    <property type="project" value="UniProtKB-UniRule"/>
</dbReference>
<dbReference type="GO" id="GO:0000287">
    <property type="term" value="F:magnesium ion binding"/>
    <property type="evidence" value="ECO:0007669"/>
    <property type="project" value="UniProtKB-UniRule"/>
</dbReference>
<dbReference type="GO" id="GO:0009102">
    <property type="term" value="P:biotin biosynthetic process"/>
    <property type="evidence" value="ECO:0007669"/>
    <property type="project" value="UniProtKB-UniRule"/>
</dbReference>
<dbReference type="CDD" id="cd03109">
    <property type="entry name" value="DTBS"/>
    <property type="match status" value="1"/>
</dbReference>
<dbReference type="Gene3D" id="3.40.50.300">
    <property type="entry name" value="P-loop containing nucleotide triphosphate hydrolases"/>
    <property type="match status" value="1"/>
</dbReference>
<dbReference type="HAMAP" id="MF_00336">
    <property type="entry name" value="BioD"/>
    <property type="match status" value="1"/>
</dbReference>
<dbReference type="InterPro" id="IPR004472">
    <property type="entry name" value="DTB_synth_BioD"/>
</dbReference>
<dbReference type="InterPro" id="IPR027417">
    <property type="entry name" value="P-loop_NTPase"/>
</dbReference>
<dbReference type="NCBIfam" id="TIGR00347">
    <property type="entry name" value="bioD"/>
    <property type="match status" value="1"/>
</dbReference>
<dbReference type="PANTHER" id="PTHR43210:SF2">
    <property type="entry name" value="ATP-DEPENDENT DETHIOBIOTIN SYNTHETASE BIOD 2"/>
    <property type="match status" value="1"/>
</dbReference>
<dbReference type="PANTHER" id="PTHR43210">
    <property type="entry name" value="DETHIOBIOTIN SYNTHETASE"/>
    <property type="match status" value="1"/>
</dbReference>
<dbReference type="Pfam" id="PF13500">
    <property type="entry name" value="AAA_26"/>
    <property type="match status" value="1"/>
</dbReference>
<dbReference type="PIRSF" id="PIRSF006755">
    <property type="entry name" value="DTB_synth"/>
    <property type="match status" value="1"/>
</dbReference>
<dbReference type="SUPFAM" id="SSF52540">
    <property type="entry name" value="P-loop containing nucleoside triphosphate hydrolases"/>
    <property type="match status" value="1"/>
</dbReference>
<proteinExistence type="inferred from homology"/>
<keyword id="KW-0067">ATP-binding</keyword>
<keyword id="KW-0093">Biotin biosynthesis</keyword>
<keyword id="KW-0963">Cytoplasm</keyword>
<keyword id="KW-0436">Ligase</keyword>
<keyword id="KW-0460">Magnesium</keyword>
<keyword id="KW-0479">Metal-binding</keyword>
<keyword id="KW-0547">Nucleotide-binding</keyword>
<keyword id="KW-1185">Reference proteome</keyword>